<feature type="peptide" id="PRO_0000443434" description="Brevinin-2GRc" evidence="1">
    <location>
        <begin position="1"/>
        <end position="37"/>
    </location>
</feature>
<protein>
    <recommendedName>
        <fullName evidence="2">Brevinin-2GRc</fullName>
    </recommendedName>
</protein>
<proteinExistence type="evidence at protein level"/>
<name>BR2C_ODOGR</name>
<evidence type="ECO:0000269" key="1">
    <source>
    </source>
</evidence>
<evidence type="ECO:0000303" key="2">
    <source>
    </source>
</evidence>
<evidence type="ECO:0000305" key="3"/>
<evidence type="ECO:0000305" key="4">
    <source>
    </source>
</evidence>
<accession>C0HL71</accession>
<dbReference type="GO" id="GO:0005576">
    <property type="term" value="C:extracellular region"/>
    <property type="evidence" value="ECO:0007669"/>
    <property type="project" value="UniProtKB-SubCell"/>
</dbReference>
<dbReference type="GO" id="GO:0050829">
    <property type="term" value="P:defense response to Gram-negative bacterium"/>
    <property type="evidence" value="ECO:0000314"/>
    <property type="project" value="UniProtKB"/>
</dbReference>
<dbReference type="GO" id="GO:0050830">
    <property type="term" value="P:defense response to Gram-positive bacterium"/>
    <property type="evidence" value="ECO:0000314"/>
    <property type="project" value="UniProtKB"/>
</dbReference>
<dbReference type="GO" id="GO:0031640">
    <property type="term" value="P:killing of cells of another organism"/>
    <property type="evidence" value="ECO:0000314"/>
    <property type="project" value="UniProtKB"/>
</dbReference>
<dbReference type="InterPro" id="IPR012521">
    <property type="entry name" value="Antimicrobial_frog_2"/>
</dbReference>
<dbReference type="Pfam" id="PF08023">
    <property type="entry name" value="Antimicrobial_2"/>
    <property type="match status" value="1"/>
</dbReference>
<comment type="function">
    <text evidence="1">Antimicrobial peptide active against the Gram-positive bacterium S.aureus (MIC=50 uM) and against the Gram-negative bacteria E.coli (MIC=12.5 uM). Has no antifungal activity against C.albicans. Shows hemolytic activity against human erythrocytes only at high concentrations (LC(50)=100 uM).</text>
</comment>
<comment type="subcellular location">
    <subcellularLocation>
        <location evidence="1">Secreted</location>
    </subcellularLocation>
</comment>
<comment type="tissue specificity">
    <text evidence="4">Expressed by the skin glands.</text>
</comment>
<comment type="mass spectrometry" mass="3817.0" method="MALDI" evidence="1"/>
<comment type="similarity">
    <text evidence="3">Belongs to the frog skin active peptide (FSAP) family. Brevinin subfamily.</text>
</comment>
<comment type="online information" name="The antimicrobial peptide database">
    <link uri="https://wangapd3.com/database/query_output.php?ID=00577"/>
</comment>
<sequence length="37" mass="3822">GLFTLIKGAAKLIGKTVAKEAGKTGLELMACKITNQC</sequence>
<reference evidence="3" key="1">
    <citation type="journal article" date="2006" name="Peptides">
        <title>Antimicrobial peptides from diverse families isolated from the skin of the Asian frog, Rana grahami.</title>
        <authorList>
            <person name="Conlon J.M."/>
            <person name="Al-Ghaferi N."/>
            <person name="Abraham B."/>
            <person name="Jiansheng H."/>
            <person name="Cosette P."/>
            <person name="Leprince J."/>
            <person name="Jouenne T."/>
            <person name="Vaudry H."/>
        </authorList>
    </citation>
    <scope>PROTEIN SEQUENCE</scope>
    <scope>FUNCTION</scope>
    <scope>MASS SPECTROMETRY</scope>
    <scope>SUBCELLULAR LOCATION</scope>
    <source>
        <tissue evidence="2">Skin</tissue>
    </source>
</reference>
<keyword id="KW-0044">Antibiotic</keyword>
<keyword id="KW-0929">Antimicrobial</keyword>
<keyword id="KW-0903">Direct protein sequencing</keyword>
<keyword id="KW-0964">Secreted</keyword>
<organism evidence="2">
    <name type="scientific">Odorrana grahami</name>
    <name type="common">Yunnanfu frog</name>
    <name type="synonym">Rana grahami</name>
    <dbReference type="NCBI Taxonomy" id="167935"/>
    <lineage>
        <taxon>Eukaryota</taxon>
        <taxon>Metazoa</taxon>
        <taxon>Chordata</taxon>
        <taxon>Craniata</taxon>
        <taxon>Vertebrata</taxon>
        <taxon>Euteleostomi</taxon>
        <taxon>Amphibia</taxon>
        <taxon>Batrachia</taxon>
        <taxon>Anura</taxon>
        <taxon>Neobatrachia</taxon>
        <taxon>Ranoidea</taxon>
        <taxon>Ranidae</taxon>
        <taxon>Odorrana</taxon>
    </lineage>
</organism>